<proteinExistence type="inferred from homology"/>
<gene>
    <name evidence="1" type="primary">lepA</name>
    <name type="ordered locus">SAV_5561</name>
</gene>
<comment type="function">
    <text evidence="1">Required for accurate and efficient protein synthesis under certain stress conditions. May act as a fidelity factor of the translation reaction, by catalyzing a one-codon backward translocation of tRNAs on improperly translocated ribosomes. Back-translocation proceeds from a post-translocation (POST) complex to a pre-translocation (PRE) complex, thus giving elongation factor G a second chance to translocate the tRNAs correctly. Binds to ribosomes in a GTP-dependent manner.</text>
</comment>
<comment type="catalytic activity">
    <reaction evidence="1">
        <text>GTP + H2O = GDP + phosphate + H(+)</text>
        <dbReference type="Rhea" id="RHEA:19669"/>
        <dbReference type="ChEBI" id="CHEBI:15377"/>
        <dbReference type="ChEBI" id="CHEBI:15378"/>
        <dbReference type="ChEBI" id="CHEBI:37565"/>
        <dbReference type="ChEBI" id="CHEBI:43474"/>
        <dbReference type="ChEBI" id="CHEBI:58189"/>
        <dbReference type="EC" id="3.6.5.n1"/>
    </reaction>
</comment>
<comment type="subcellular location">
    <subcellularLocation>
        <location evidence="1">Cell membrane</location>
        <topology evidence="1">Peripheral membrane protein</topology>
        <orientation evidence="1">Cytoplasmic side</orientation>
    </subcellularLocation>
</comment>
<comment type="similarity">
    <text evidence="1">Belongs to the TRAFAC class translation factor GTPase superfamily. Classic translation factor GTPase family. LepA subfamily.</text>
</comment>
<accession>Q82BZ3</accession>
<organism>
    <name type="scientific">Streptomyces avermitilis (strain ATCC 31267 / DSM 46492 / JCM 5070 / NBRC 14893 / NCIMB 12804 / NRRL 8165 / MA-4680)</name>
    <dbReference type="NCBI Taxonomy" id="227882"/>
    <lineage>
        <taxon>Bacteria</taxon>
        <taxon>Bacillati</taxon>
        <taxon>Actinomycetota</taxon>
        <taxon>Actinomycetes</taxon>
        <taxon>Kitasatosporales</taxon>
        <taxon>Streptomycetaceae</taxon>
        <taxon>Streptomyces</taxon>
    </lineage>
</organism>
<feature type="chain" id="PRO_0000176350" description="Elongation factor 4">
    <location>
        <begin position="1"/>
        <end position="622"/>
    </location>
</feature>
<feature type="domain" description="tr-type G">
    <location>
        <begin position="17"/>
        <end position="201"/>
    </location>
</feature>
<feature type="binding site" evidence="1">
    <location>
        <begin position="29"/>
        <end position="34"/>
    </location>
    <ligand>
        <name>GTP</name>
        <dbReference type="ChEBI" id="CHEBI:37565"/>
    </ligand>
</feature>
<feature type="binding site" evidence="1">
    <location>
        <begin position="148"/>
        <end position="151"/>
    </location>
    <ligand>
        <name>GTP</name>
        <dbReference type="ChEBI" id="CHEBI:37565"/>
    </ligand>
</feature>
<dbReference type="EC" id="3.6.5.n1" evidence="1"/>
<dbReference type="EMBL" id="BA000030">
    <property type="protein sequence ID" value="BAC73273.1"/>
    <property type="molecule type" value="Genomic_DNA"/>
</dbReference>
<dbReference type="RefSeq" id="WP_010986963.1">
    <property type="nucleotide sequence ID" value="NZ_JZJK01000066.1"/>
</dbReference>
<dbReference type="SMR" id="Q82BZ3"/>
<dbReference type="GeneID" id="41542650"/>
<dbReference type="KEGG" id="sma:SAVERM_5561"/>
<dbReference type="eggNOG" id="COG0481">
    <property type="taxonomic scope" value="Bacteria"/>
</dbReference>
<dbReference type="HOGENOM" id="CLU_009995_3_3_11"/>
<dbReference type="OrthoDB" id="9801472at2"/>
<dbReference type="Proteomes" id="UP000000428">
    <property type="component" value="Chromosome"/>
</dbReference>
<dbReference type="GO" id="GO:0005886">
    <property type="term" value="C:plasma membrane"/>
    <property type="evidence" value="ECO:0007669"/>
    <property type="project" value="UniProtKB-SubCell"/>
</dbReference>
<dbReference type="GO" id="GO:0005525">
    <property type="term" value="F:GTP binding"/>
    <property type="evidence" value="ECO:0007669"/>
    <property type="project" value="UniProtKB-UniRule"/>
</dbReference>
<dbReference type="GO" id="GO:0003924">
    <property type="term" value="F:GTPase activity"/>
    <property type="evidence" value="ECO:0007669"/>
    <property type="project" value="UniProtKB-UniRule"/>
</dbReference>
<dbReference type="GO" id="GO:0043022">
    <property type="term" value="F:ribosome binding"/>
    <property type="evidence" value="ECO:0007669"/>
    <property type="project" value="UniProtKB-UniRule"/>
</dbReference>
<dbReference type="GO" id="GO:0003746">
    <property type="term" value="F:translation elongation factor activity"/>
    <property type="evidence" value="ECO:0007669"/>
    <property type="project" value="UniProtKB-UniRule"/>
</dbReference>
<dbReference type="GO" id="GO:0045727">
    <property type="term" value="P:positive regulation of translation"/>
    <property type="evidence" value="ECO:0007669"/>
    <property type="project" value="UniProtKB-UniRule"/>
</dbReference>
<dbReference type="CDD" id="cd03699">
    <property type="entry name" value="EF4_II"/>
    <property type="match status" value="1"/>
</dbReference>
<dbReference type="CDD" id="cd16260">
    <property type="entry name" value="EF4_III"/>
    <property type="match status" value="1"/>
</dbReference>
<dbReference type="CDD" id="cd01890">
    <property type="entry name" value="LepA"/>
    <property type="match status" value="1"/>
</dbReference>
<dbReference type="CDD" id="cd03709">
    <property type="entry name" value="lepA_C"/>
    <property type="match status" value="1"/>
</dbReference>
<dbReference type="FunFam" id="3.30.70.240:FF:000011">
    <property type="entry name" value="Elongation factor 4"/>
    <property type="match status" value="1"/>
</dbReference>
<dbReference type="FunFam" id="3.40.50.300:FF:000078">
    <property type="entry name" value="Elongation factor 4"/>
    <property type="match status" value="1"/>
</dbReference>
<dbReference type="FunFam" id="2.40.30.10:FF:000015">
    <property type="entry name" value="Translation factor GUF1, mitochondrial"/>
    <property type="match status" value="1"/>
</dbReference>
<dbReference type="FunFam" id="3.30.70.2570:FF:000001">
    <property type="entry name" value="Translation factor GUF1, mitochondrial"/>
    <property type="match status" value="1"/>
</dbReference>
<dbReference type="FunFam" id="3.30.70.870:FF:000004">
    <property type="entry name" value="Translation factor GUF1, mitochondrial"/>
    <property type="match status" value="1"/>
</dbReference>
<dbReference type="Gene3D" id="3.30.70.240">
    <property type="match status" value="1"/>
</dbReference>
<dbReference type="Gene3D" id="3.30.70.2570">
    <property type="entry name" value="Elongation factor 4, C-terminal domain"/>
    <property type="match status" value="1"/>
</dbReference>
<dbReference type="Gene3D" id="3.30.70.870">
    <property type="entry name" value="Elongation Factor G (Translational Gtpase), domain 3"/>
    <property type="match status" value="1"/>
</dbReference>
<dbReference type="Gene3D" id="3.40.50.300">
    <property type="entry name" value="P-loop containing nucleotide triphosphate hydrolases"/>
    <property type="match status" value="1"/>
</dbReference>
<dbReference type="Gene3D" id="2.40.30.10">
    <property type="entry name" value="Translation factors"/>
    <property type="match status" value="1"/>
</dbReference>
<dbReference type="HAMAP" id="MF_00071">
    <property type="entry name" value="LepA"/>
    <property type="match status" value="1"/>
</dbReference>
<dbReference type="InterPro" id="IPR006297">
    <property type="entry name" value="EF-4"/>
</dbReference>
<dbReference type="InterPro" id="IPR035647">
    <property type="entry name" value="EFG_III/V"/>
</dbReference>
<dbReference type="InterPro" id="IPR000640">
    <property type="entry name" value="EFG_V-like"/>
</dbReference>
<dbReference type="InterPro" id="IPR004161">
    <property type="entry name" value="EFTu-like_2"/>
</dbReference>
<dbReference type="InterPro" id="IPR031157">
    <property type="entry name" value="G_TR_CS"/>
</dbReference>
<dbReference type="InterPro" id="IPR038363">
    <property type="entry name" value="LepA_C_sf"/>
</dbReference>
<dbReference type="InterPro" id="IPR013842">
    <property type="entry name" value="LepA_CTD"/>
</dbReference>
<dbReference type="InterPro" id="IPR035654">
    <property type="entry name" value="LepA_IV"/>
</dbReference>
<dbReference type="InterPro" id="IPR027417">
    <property type="entry name" value="P-loop_NTPase"/>
</dbReference>
<dbReference type="InterPro" id="IPR005225">
    <property type="entry name" value="Small_GTP-bd"/>
</dbReference>
<dbReference type="InterPro" id="IPR000795">
    <property type="entry name" value="T_Tr_GTP-bd_dom"/>
</dbReference>
<dbReference type="InterPro" id="IPR009000">
    <property type="entry name" value="Transl_B-barrel_sf"/>
</dbReference>
<dbReference type="NCBIfam" id="TIGR01393">
    <property type="entry name" value="lepA"/>
    <property type="match status" value="1"/>
</dbReference>
<dbReference type="NCBIfam" id="TIGR00231">
    <property type="entry name" value="small_GTP"/>
    <property type="match status" value="1"/>
</dbReference>
<dbReference type="PANTHER" id="PTHR43512:SF4">
    <property type="entry name" value="TRANSLATION FACTOR GUF1 HOMOLOG, CHLOROPLASTIC"/>
    <property type="match status" value="1"/>
</dbReference>
<dbReference type="PANTHER" id="PTHR43512">
    <property type="entry name" value="TRANSLATION FACTOR GUF1-RELATED"/>
    <property type="match status" value="1"/>
</dbReference>
<dbReference type="Pfam" id="PF00679">
    <property type="entry name" value="EFG_C"/>
    <property type="match status" value="1"/>
</dbReference>
<dbReference type="Pfam" id="PF00009">
    <property type="entry name" value="GTP_EFTU"/>
    <property type="match status" value="1"/>
</dbReference>
<dbReference type="Pfam" id="PF03144">
    <property type="entry name" value="GTP_EFTU_D2"/>
    <property type="match status" value="1"/>
</dbReference>
<dbReference type="Pfam" id="PF06421">
    <property type="entry name" value="LepA_C"/>
    <property type="match status" value="1"/>
</dbReference>
<dbReference type="PRINTS" id="PR00315">
    <property type="entry name" value="ELONGATNFCT"/>
</dbReference>
<dbReference type="SMART" id="SM00838">
    <property type="entry name" value="EFG_C"/>
    <property type="match status" value="1"/>
</dbReference>
<dbReference type="SUPFAM" id="SSF54980">
    <property type="entry name" value="EF-G C-terminal domain-like"/>
    <property type="match status" value="2"/>
</dbReference>
<dbReference type="SUPFAM" id="SSF52540">
    <property type="entry name" value="P-loop containing nucleoside triphosphate hydrolases"/>
    <property type="match status" value="1"/>
</dbReference>
<dbReference type="SUPFAM" id="SSF50447">
    <property type="entry name" value="Translation proteins"/>
    <property type="match status" value="1"/>
</dbReference>
<dbReference type="PROSITE" id="PS00301">
    <property type="entry name" value="G_TR_1"/>
    <property type="match status" value="1"/>
</dbReference>
<dbReference type="PROSITE" id="PS51722">
    <property type="entry name" value="G_TR_2"/>
    <property type="match status" value="1"/>
</dbReference>
<evidence type="ECO:0000255" key="1">
    <source>
        <dbReference type="HAMAP-Rule" id="MF_00071"/>
    </source>
</evidence>
<reference key="1">
    <citation type="journal article" date="2001" name="Proc. Natl. Acad. Sci. U.S.A.">
        <title>Genome sequence of an industrial microorganism Streptomyces avermitilis: deducing the ability of producing secondary metabolites.</title>
        <authorList>
            <person name="Omura S."/>
            <person name="Ikeda H."/>
            <person name="Ishikawa J."/>
            <person name="Hanamoto A."/>
            <person name="Takahashi C."/>
            <person name="Shinose M."/>
            <person name="Takahashi Y."/>
            <person name="Horikawa H."/>
            <person name="Nakazawa H."/>
            <person name="Osonoe T."/>
            <person name="Kikuchi H."/>
            <person name="Shiba T."/>
            <person name="Sakaki Y."/>
            <person name="Hattori M."/>
        </authorList>
    </citation>
    <scope>NUCLEOTIDE SEQUENCE [LARGE SCALE GENOMIC DNA]</scope>
    <source>
        <strain>ATCC 31267 / DSM 46492 / JCM 5070 / NBRC 14893 / NCIMB 12804 / NRRL 8165 / MA-4680</strain>
    </source>
</reference>
<reference key="2">
    <citation type="journal article" date="2003" name="Nat. Biotechnol.">
        <title>Complete genome sequence and comparative analysis of the industrial microorganism Streptomyces avermitilis.</title>
        <authorList>
            <person name="Ikeda H."/>
            <person name="Ishikawa J."/>
            <person name="Hanamoto A."/>
            <person name="Shinose M."/>
            <person name="Kikuchi H."/>
            <person name="Shiba T."/>
            <person name="Sakaki Y."/>
            <person name="Hattori M."/>
            <person name="Omura S."/>
        </authorList>
    </citation>
    <scope>NUCLEOTIDE SEQUENCE [LARGE SCALE GENOMIC DNA]</scope>
    <source>
        <strain>ATCC 31267 / DSM 46492 / JCM 5070 / NBRC 14893 / NCIMB 12804 / NRRL 8165 / MA-4680</strain>
    </source>
</reference>
<sequence>MPATPNNVPEPSRTDPALIRNFCIIAHIDHGKSTLADRMLQLTGVVDQRQMRAQYLDRMDIERERGITIKSQAVRLPWAPTQEPGNTHILNMIDTPGHVDFTYEVSRSLAACEGTVLLVDAAQGIEAQTLANLYLAMENDLKIIPVLNKIDLPAAQPEKFSEELANLIGCDPEDVLKVSAKTGLGVEALLDKVVAEVPAPVGVADAPARAMIFDSVYDSYRGVVTYVRVIDGQLNKRERIRMMSTGATHELLEIGVSSPEMKPADGLGVGEVGYLITGVKDVRQSKVGDTITTLNKGATEALGGYKDPKPMVFSGLYPLDGSDYPELRDALDKLQLNDAALVYEPETSAALGFGFRVGFLGLLHLDVIRERLEREFGLDLIATAPNVVYRVLMEDGSEHTVTNPSEFPEGKISEVYEPVVRATILAPSEFIGSIMELCQTRRGTLLGMDYLSEDRVEIRYTLPLAEIVFDFFDQLKSKTRGYASLDYEPTGEQASSLVKVDILLHGDKVDAFSAITHKDAAYAYGVRLVAKLRELIPRQAFEVPIQAAIGSRVIARETIRAIRKDVLAKCYGGDISRKRKLLEKQKEGKKRMKMVGSVEVPQEAFIAVLSSDDSGGSAKGKK</sequence>
<keyword id="KW-1003">Cell membrane</keyword>
<keyword id="KW-0342">GTP-binding</keyword>
<keyword id="KW-0378">Hydrolase</keyword>
<keyword id="KW-0472">Membrane</keyword>
<keyword id="KW-0547">Nucleotide-binding</keyword>
<keyword id="KW-0648">Protein biosynthesis</keyword>
<keyword id="KW-1185">Reference proteome</keyword>
<name>LEPA_STRAW</name>
<protein>
    <recommendedName>
        <fullName evidence="1">Elongation factor 4</fullName>
        <shortName evidence="1">EF-4</shortName>
        <ecNumber evidence="1">3.6.5.n1</ecNumber>
    </recommendedName>
    <alternativeName>
        <fullName evidence="1">Ribosomal back-translocase LepA</fullName>
    </alternativeName>
</protein>